<accession>P08207</accession>
<dbReference type="EMBL" id="M16465">
    <property type="protein sequence ID" value="AAA37363.1"/>
    <property type="molecule type" value="mRNA"/>
</dbReference>
<dbReference type="EMBL" id="BC025044">
    <property type="protein sequence ID" value="AAH25044.1"/>
    <property type="molecule type" value="mRNA"/>
</dbReference>
<dbReference type="CCDS" id="CCDS38526.1"/>
<dbReference type="PIR" id="A28489">
    <property type="entry name" value="A28489"/>
</dbReference>
<dbReference type="RefSeq" id="NP_033138.1">
    <property type="nucleotide sequence ID" value="NM_009112.2"/>
</dbReference>
<dbReference type="SMR" id="P08207"/>
<dbReference type="BioGRID" id="203049">
    <property type="interactions" value="11"/>
</dbReference>
<dbReference type="ComplexPortal" id="CPX-898">
    <property type="entry name" value="Annexin A2 - S100-A10 complex"/>
</dbReference>
<dbReference type="ComplexPortal" id="CPX-899">
    <property type="entry name" value="SMARCA3 - Annexin A2 - S100-A10 complex"/>
</dbReference>
<dbReference type="ComplexPortal" id="CPX-905">
    <property type="entry name" value="AHNAK - Annexin A2 - S100-A10 complex"/>
</dbReference>
<dbReference type="CORUM" id="P08207"/>
<dbReference type="FunCoup" id="P08207">
    <property type="interactions" value="306"/>
</dbReference>
<dbReference type="IntAct" id="P08207">
    <property type="interactions" value="7"/>
</dbReference>
<dbReference type="STRING" id="10090.ENSMUSP00000036949"/>
<dbReference type="GlyGen" id="P08207">
    <property type="glycosylation" value="1 site, 1 O-linked glycan (1 site)"/>
</dbReference>
<dbReference type="iPTMnet" id="P08207"/>
<dbReference type="PhosphoSitePlus" id="P08207"/>
<dbReference type="jPOST" id="P08207"/>
<dbReference type="PaxDb" id="10090-ENSMUSP00000036949"/>
<dbReference type="PeptideAtlas" id="P08207"/>
<dbReference type="ProteomicsDB" id="255435"/>
<dbReference type="Pumba" id="P08207"/>
<dbReference type="Antibodypedia" id="1093">
    <property type="antibodies" value="514 antibodies from 39 providers"/>
</dbReference>
<dbReference type="DNASU" id="20194"/>
<dbReference type="Ensembl" id="ENSMUST00000045756.14">
    <property type="protein sequence ID" value="ENSMUSP00000036949.8"/>
    <property type="gene ID" value="ENSMUSG00000041959.15"/>
</dbReference>
<dbReference type="Ensembl" id="ENSMUST00000170612.2">
    <property type="protein sequence ID" value="ENSMUSP00000130712.2"/>
    <property type="gene ID" value="ENSMUSG00000041959.15"/>
</dbReference>
<dbReference type="GeneID" id="20194"/>
<dbReference type="KEGG" id="mmu:20194"/>
<dbReference type="UCSC" id="uc008qfk.1">
    <property type="organism name" value="mouse"/>
</dbReference>
<dbReference type="AGR" id="MGI:1339468"/>
<dbReference type="CTD" id="6281"/>
<dbReference type="MGI" id="MGI:1339468">
    <property type="gene designation" value="S100a10"/>
</dbReference>
<dbReference type="VEuPathDB" id="HostDB:ENSMUSG00000041959"/>
<dbReference type="eggNOG" id="ENOG502S6TB">
    <property type="taxonomic scope" value="Eukaryota"/>
</dbReference>
<dbReference type="GeneTree" id="ENSGT00940000154197"/>
<dbReference type="HOGENOM" id="CLU_138624_2_1_1"/>
<dbReference type="InParanoid" id="P08207"/>
<dbReference type="OMA" id="VACEQCY"/>
<dbReference type="OrthoDB" id="26525at2759"/>
<dbReference type="PhylomeDB" id="P08207"/>
<dbReference type="TreeFam" id="TF332727"/>
<dbReference type="Reactome" id="R-MMU-75205">
    <property type="pathway name" value="Dissolution of Fibrin Clot"/>
</dbReference>
<dbReference type="BioGRID-ORCS" id="20194">
    <property type="hits" value="1 hit in 79 CRISPR screens"/>
</dbReference>
<dbReference type="ChiTaRS" id="S100a10">
    <property type="organism name" value="mouse"/>
</dbReference>
<dbReference type="PRO" id="PR:P08207"/>
<dbReference type="Proteomes" id="UP000000589">
    <property type="component" value="Chromosome 3"/>
</dbReference>
<dbReference type="RNAct" id="P08207">
    <property type="molecule type" value="protein"/>
</dbReference>
<dbReference type="Bgee" id="ENSMUSG00000041959">
    <property type="expression patterns" value="Expressed in conjunctival fornix and 305 other cell types or tissues"/>
</dbReference>
<dbReference type="ExpressionAtlas" id="P08207">
    <property type="expression patterns" value="baseline and differential"/>
</dbReference>
<dbReference type="GO" id="GO:1990665">
    <property type="term" value="C:AnxA2-p11 complex"/>
    <property type="evidence" value="ECO:0007669"/>
    <property type="project" value="Ensembl"/>
</dbReference>
<dbReference type="GO" id="GO:0009986">
    <property type="term" value="C:cell surface"/>
    <property type="evidence" value="ECO:0000314"/>
    <property type="project" value="MGI"/>
</dbReference>
<dbReference type="GO" id="GO:0062023">
    <property type="term" value="C:collagen-containing extracellular matrix"/>
    <property type="evidence" value="ECO:0007005"/>
    <property type="project" value="BHF-UCL"/>
</dbReference>
<dbReference type="GO" id="GO:0045121">
    <property type="term" value="C:membrane raft"/>
    <property type="evidence" value="ECO:0007669"/>
    <property type="project" value="Ensembl"/>
</dbReference>
<dbReference type="GO" id="GO:0016363">
    <property type="term" value="C:nuclear matrix"/>
    <property type="evidence" value="ECO:0000303"/>
    <property type="project" value="ComplexPortal"/>
</dbReference>
<dbReference type="GO" id="GO:0005886">
    <property type="term" value="C:plasma membrane"/>
    <property type="evidence" value="ECO:0000314"/>
    <property type="project" value="ComplexPortal"/>
</dbReference>
<dbReference type="GO" id="GO:0098797">
    <property type="term" value="C:plasma membrane protein complex"/>
    <property type="evidence" value="ECO:0000353"/>
    <property type="project" value="ComplexPortal"/>
</dbReference>
<dbReference type="GO" id="GO:0090575">
    <property type="term" value="C:RNA polymerase II transcription regulator complex"/>
    <property type="evidence" value="ECO:0000353"/>
    <property type="project" value="ComplexPortal"/>
</dbReference>
<dbReference type="GO" id="GO:0005509">
    <property type="term" value="F:calcium ion binding"/>
    <property type="evidence" value="ECO:0007669"/>
    <property type="project" value="InterPro"/>
</dbReference>
<dbReference type="GO" id="GO:0042803">
    <property type="term" value="F:protein homodimerization activity"/>
    <property type="evidence" value="ECO:0007669"/>
    <property type="project" value="Ensembl"/>
</dbReference>
<dbReference type="GO" id="GO:0044325">
    <property type="term" value="F:transmembrane transporter binding"/>
    <property type="evidence" value="ECO:0007669"/>
    <property type="project" value="Ensembl"/>
</dbReference>
<dbReference type="GO" id="GO:0001765">
    <property type="term" value="P:membrane raft assembly"/>
    <property type="evidence" value="ECO:0007669"/>
    <property type="project" value="Ensembl"/>
</dbReference>
<dbReference type="GO" id="GO:0042789">
    <property type="term" value="P:mRNA transcription by RNA polymerase II"/>
    <property type="evidence" value="ECO:0000314"/>
    <property type="project" value="ComplexPortal"/>
</dbReference>
<dbReference type="GO" id="GO:0045921">
    <property type="term" value="P:positive regulation of exocytosis"/>
    <property type="evidence" value="ECO:0000303"/>
    <property type="project" value="ComplexPortal"/>
</dbReference>
<dbReference type="GO" id="GO:0051894">
    <property type="term" value="P:positive regulation of focal adhesion assembly"/>
    <property type="evidence" value="ECO:0007669"/>
    <property type="project" value="Ensembl"/>
</dbReference>
<dbReference type="GO" id="GO:1905686">
    <property type="term" value="P:positive regulation of plasma membrane repair"/>
    <property type="evidence" value="ECO:0000303"/>
    <property type="project" value="ComplexPortal"/>
</dbReference>
<dbReference type="GO" id="GO:0010756">
    <property type="term" value="P:positive regulation of plasminogen activation"/>
    <property type="evidence" value="ECO:0000266"/>
    <property type="project" value="ComplexPortal"/>
</dbReference>
<dbReference type="GO" id="GO:0051496">
    <property type="term" value="P:positive regulation of stress fiber assembly"/>
    <property type="evidence" value="ECO:0007669"/>
    <property type="project" value="Ensembl"/>
</dbReference>
<dbReference type="GO" id="GO:1900026">
    <property type="term" value="P:positive regulation of substrate adhesion-dependent cell spreading"/>
    <property type="evidence" value="ECO:0007669"/>
    <property type="project" value="Ensembl"/>
</dbReference>
<dbReference type="GO" id="GO:0045944">
    <property type="term" value="P:positive regulation of transcription by RNA polymerase II"/>
    <property type="evidence" value="ECO:0000314"/>
    <property type="project" value="ComplexPortal"/>
</dbReference>
<dbReference type="GO" id="GO:0072659">
    <property type="term" value="P:protein localization to plasma membrane"/>
    <property type="evidence" value="ECO:0007669"/>
    <property type="project" value="Ensembl"/>
</dbReference>
<dbReference type="GO" id="GO:0050767">
    <property type="term" value="P:regulation of neurogenesis"/>
    <property type="evidence" value="ECO:0000314"/>
    <property type="project" value="ComplexPortal"/>
</dbReference>
<dbReference type="GO" id="GO:0006900">
    <property type="term" value="P:vesicle budding from membrane"/>
    <property type="evidence" value="ECO:0007669"/>
    <property type="project" value="Ensembl"/>
</dbReference>
<dbReference type="FunFam" id="1.10.238.10:FF:000167">
    <property type="entry name" value="Protein S100-A10"/>
    <property type="match status" value="1"/>
</dbReference>
<dbReference type="Gene3D" id="1.10.238.10">
    <property type="entry name" value="EF-hand"/>
    <property type="match status" value="1"/>
</dbReference>
<dbReference type="InterPro" id="IPR011992">
    <property type="entry name" value="EF-hand-dom_pair"/>
</dbReference>
<dbReference type="InterPro" id="IPR002048">
    <property type="entry name" value="EF_hand_dom"/>
</dbReference>
<dbReference type="InterPro" id="IPR001751">
    <property type="entry name" value="S100/CaBP7/8-like_CS"/>
</dbReference>
<dbReference type="InterPro" id="IPR013787">
    <property type="entry name" value="S100_Ca-bd_sub"/>
</dbReference>
<dbReference type="PANTHER" id="PTHR11639:SF74">
    <property type="entry name" value="PROTEIN S100-A10"/>
    <property type="match status" value="1"/>
</dbReference>
<dbReference type="PANTHER" id="PTHR11639">
    <property type="entry name" value="S100 CALCIUM-BINDING PROTEIN"/>
    <property type="match status" value="1"/>
</dbReference>
<dbReference type="Pfam" id="PF01023">
    <property type="entry name" value="S_100"/>
    <property type="match status" value="1"/>
</dbReference>
<dbReference type="SMART" id="SM01394">
    <property type="entry name" value="S_100"/>
    <property type="match status" value="1"/>
</dbReference>
<dbReference type="SUPFAM" id="SSF47473">
    <property type="entry name" value="EF-hand"/>
    <property type="match status" value="1"/>
</dbReference>
<dbReference type="PROSITE" id="PS50222">
    <property type="entry name" value="EF_HAND_2"/>
    <property type="match status" value="1"/>
</dbReference>
<dbReference type="PROSITE" id="PS00303">
    <property type="entry name" value="S100_CABP"/>
    <property type="match status" value="1"/>
</dbReference>
<sequence>MPSQMEHAMETMMLTFHRFAGDKDHLTKEDLRVLMEREFPGFLENQKDPLAVDKIMKDLDQCRDGKVGFQSFLSLVAGLTIACNDYFVVNMKQKGKK</sequence>
<feature type="chain" id="PRO_0000144004" description="Protein S100-A10">
    <location>
        <begin position="1"/>
        <end position="97"/>
    </location>
</feature>
<feature type="domain" description="EF-hand" evidence="3">
    <location>
        <begin position="47"/>
        <end position="82"/>
    </location>
</feature>
<feature type="region of interest" description="Ancestral calcium site">
    <location>
        <begin position="60"/>
        <end position="71"/>
    </location>
</feature>
<feature type="modified residue" description="N6-acetyllysine" evidence="6">
    <location>
        <position position="23"/>
    </location>
</feature>
<feature type="modified residue" description="N6-acetyllysine" evidence="2">
    <location>
        <position position="28"/>
    </location>
</feature>
<feature type="modified residue" description="N6-acetyllysine" evidence="2">
    <location>
        <position position="54"/>
    </location>
</feature>
<feature type="modified residue" description="N6-acetyllysine" evidence="2">
    <location>
        <position position="57"/>
    </location>
</feature>
<keyword id="KW-0007">Acetylation</keyword>
<keyword id="KW-1185">Reference proteome</keyword>
<keyword id="KW-0677">Repeat</keyword>
<gene>
    <name type="primary">S100a10</name>
    <name type="synonym">Cal1l</name>
</gene>
<comment type="function">
    <text>Because S100A10 induces the dimerization of ANXA2/p36, it may function as a regulator of protein phosphorylation in that the ANXA2 monomer is the preferred target (in vitro) of tyrosine-specific kinase.</text>
</comment>
<comment type="subunit">
    <text evidence="1 2 4">Heterotetramer containing 2 light chains of S100A10/p11 and 2 heavy chains of ANXA2/p36 (By similarity). Interacts with SCN10A (By similarity). Interacts with TASOR (PubMed:31112734).</text>
</comment>
<comment type="interaction">
    <interactant intactId="EBI-643986">
        <id>P08207</id>
    </interactant>
    <interactant intactId="EBI-738510">
        <id>P07356</id>
        <label>Anxa2</label>
    </interactant>
    <organismsDiffer>false</organismsDiffer>
    <experiments>2</experiments>
</comment>
<comment type="miscellaneous">
    <text>Does not appear to bind calcium. Contains 2 ancestral calcium site related to EF-hand domains that have lost their ability to bind calcium.</text>
</comment>
<comment type="similarity">
    <text evidence="5">Belongs to the S-100 family.</text>
</comment>
<reference key="1">
    <citation type="journal article" date="1987" name="J. Biol. Chem.">
        <title>cDNA sequence and tissue distribution of the mRNA for bovine and murine p11, the S100-related light chain of the protein-tyrosine kinase substrate p36 (calpactin I).</title>
        <authorList>
            <person name="Saris C.J.M."/>
            <person name="Kristensen T."/>
            <person name="D'Eustachio P."/>
            <person name="Hicks L.J."/>
            <person name="Noonan D.J."/>
            <person name="Glenney J.R. Jr."/>
            <person name="Hunter T."/>
            <person name="Tack B.F."/>
        </authorList>
    </citation>
    <scope>NUCLEOTIDE SEQUENCE [MRNA]</scope>
</reference>
<reference key="2">
    <citation type="journal article" date="2004" name="Genome Res.">
        <title>The status, quality, and expansion of the NIH full-length cDNA project: the Mammalian Gene Collection (MGC).</title>
        <authorList>
            <consortium name="The MGC Project Team"/>
        </authorList>
    </citation>
    <scope>NUCLEOTIDE SEQUENCE [LARGE SCALE MRNA]</scope>
    <source>
        <strain>FVB/N</strain>
        <tissue>Mammary gland</tissue>
    </source>
</reference>
<reference key="3">
    <citation type="journal article" date="2010" name="Cell">
        <title>A tissue-specific atlas of mouse protein phosphorylation and expression.</title>
        <authorList>
            <person name="Huttlin E.L."/>
            <person name="Jedrychowski M.P."/>
            <person name="Elias J.E."/>
            <person name="Goswami T."/>
            <person name="Rad R."/>
            <person name="Beausoleil S.A."/>
            <person name="Villen J."/>
            <person name="Haas W."/>
            <person name="Sowa M.E."/>
            <person name="Gygi S.P."/>
        </authorList>
    </citation>
    <scope>IDENTIFICATION BY MASS SPECTROMETRY [LARGE SCALE ANALYSIS]</scope>
    <source>
        <tissue>Brain</tissue>
        <tissue>Brown adipose tissue</tissue>
        <tissue>Heart</tissue>
        <tissue>Kidney</tissue>
        <tissue>Liver</tissue>
        <tissue>Lung</tissue>
        <tissue>Pancreas</tissue>
        <tissue>Spleen</tissue>
        <tissue>Testis</tissue>
    </source>
</reference>
<reference key="4">
    <citation type="journal article" date="2013" name="Mol. Cell">
        <title>SIRT5-mediated lysine desuccinylation impacts diverse metabolic pathways.</title>
        <authorList>
            <person name="Park J."/>
            <person name="Chen Y."/>
            <person name="Tishkoff D.X."/>
            <person name="Peng C."/>
            <person name="Tan M."/>
            <person name="Dai L."/>
            <person name="Xie Z."/>
            <person name="Zhang Y."/>
            <person name="Zwaans B.M."/>
            <person name="Skinner M.E."/>
            <person name="Lombard D.B."/>
            <person name="Zhao Y."/>
        </authorList>
    </citation>
    <scope>ACETYLATION [LARGE SCALE ANALYSIS] AT LYS-23</scope>
    <scope>IDENTIFICATION BY MASS SPECTROMETRY [LARGE SCALE ANALYSIS]</scope>
    <source>
        <tissue>Embryonic fibroblast</tissue>
    </source>
</reference>
<reference key="5">
    <citation type="journal article" date="2019" name="Exp. Cell Res.">
        <title>Fam208a orchestrates interaction protein network essential for early embryonic development and cell division.</title>
        <authorList>
            <person name="Gresakova V."/>
            <person name="Novosadova V."/>
            <person name="Prochazkova M."/>
            <person name="Bhargava S."/>
            <person name="Jenickova I."/>
            <person name="Prochazka J."/>
            <person name="Sedlacek R."/>
        </authorList>
    </citation>
    <scope>INTERACTION WITH TASOR</scope>
</reference>
<evidence type="ECO:0000250" key="1">
    <source>
        <dbReference type="UniProtKB" id="P05943"/>
    </source>
</evidence>
<evidence type="ECO:0000250" key="2">
    <source>
        <dbReference type="UniProtKB" id="P60903"/>
    </source>
</evidence>
<evidence type="ECO:0000255" key="3">
    <source>
        <dbReference type="PROSITE-ProRule" id="PRU00448"/>
    </source>
</evidence>
<evidence type="ECO:0000269" key="4">
    <source>
    </source>
</evidence>
<evidence type="ECO:0000305" key="5"/>
<evidence type="ECO:0007744" key="6">
    <source>
    </source>
</evidence>
<protein>
    <recommendedName>
        <fullName>Protein S100-A10</fullName>
    </recommendedName>
    <alternativeName>
        <fullName>Calpactin I light chain</fullName>
    </alternativeName>
    <alternativeName>
        <fullName>Calpactin-1 light chain</fullName>
    </alternativeName>
    <alternativeName>
        <fullName>Cellular ligand of annexin II</fullName>
    </alternativeName>
    <alternativeName>
        <fullName>S100 calcium-binding protein A10</fullName>
    </alternativeName>
    <alternativeName>
        <fullName>p10 protein</fullName>
    </alternativeName>
    <alternativeName>
        <fullName>p11</fullName>
    </alternativeName>
</protein>
<organism>
    <name type="scientific">Mus musculus</name>
    <name type="common">Mouse</name>
    <dbReference type="NCBI Taxonomy" id="10090"/>
    <lineage>
        <taxon>Eukaryota</taxon>
        <taxon>Metazoa</taxon>
        <taxon>Chordata</taxon>
        <taxon>Craniata</taxon>
        <taxon>Vertebrata</taxon>
        <taxon>Euteleostomi</taxon>
        <taxon>Mammalia</taxon>
        <taxon>Eutheria</taxon>
        <taxon>Euarchontoglires</taxon>
        <taxon>Glires</taxon>
        <taxon>Rodentia</taxon>
        <taxon>Myomorpha</taxon>
        <taxon>Muroidea</taxon>
        <taxon>Muridae</taxon>
        <taxon>Murinae</taxon>
        <taxon>Mus</taxon>
        <taxon>Mus</taxon>
    </lineage>
</organism>
<name>S10AA_MOUSE</name>
<proteinExistence type="evidence at protein level"/>